<accession>P56619</accession>
<sequence length="47" mass="5030">AGALGESGASLSIVNSLDVLRNRLLLEIARKKAKEGANRNRQILLSL</sequence>
<name>DIUH2_TENMO</name>
<feature type="chain" id="PRO_0000221022" description="Diuretic hormone 2">
    <location>
        <begin position="1"/>
        <end position="47"/>
    </location>
</feature>
<protein>
    <recommendedName>
        <fullName>Diuretic hormone 2</fullName>
    </recommendedName>
    <alternativeName>
        <fullName>DH(47)</fullName>
        <shortName>DH47</shortName>
    </alternativeName>
    <alternativeName>
        <fullName>Diuretic hormone II</fullName>
        <shortName>DH II</shortName>
    </alternativeName>
    <alternativeName>
        <fullName>Diuretic peptide II</fullName>
        <shortName>DP II</shortName>
    </alternativeName>
</protein>
<evidence type="ECO:0000305" key="1"/>
<reference key="1">
    <citation type="journal article" date="1998" name="Peptides">
        <title>Isolation and identification of a second diuretic hormone from Tenebrio molitor.</title>
        <authorList>
            <person name="Furuya K."/>
            <person name="Schegg K.M."/>
            <person name="Schooley D.A."/>
        </authorList>
    </citation>
    <scope>PROTEIN SEQUENCE</scope>
    <source>
        <tissue>Head</tissue>
    </source>
</reference>
<dbReference type="PIR" id="A59009">
    <property type="entry name" value="A59009"/>
</dbReference>
<dbReference type="SMR" id="P56619"/>
<dbReference type="GO" id="GO:0005576">
    <property type="term" value="C:extracellular region"/>
    <property type="evidence" value="ECO:0007669"/>
    <property type="project" value="UniProtKB-SubCell"/>
</dbReference>
<dbReference type="GO" id="GO:0005179">
    <property type="term" value="F:hormone activity"/>
    <property type="evidence" value="ECO:0007669"/>
    <property type="project" value="UniProtKB-KW"/>
</dbReference>
<dbReference type="InterPro" id="IPR018446">
    <property type="entry name" value="Corticotropin-releasing_fac_CS"/>
</dbReference>
<dbReference type="InterPro" id="IPR000187">
    <property type="entry name" value="CRF"/>
</dbReference>
<dbReference type="Pfam" id="PF00473">
    <property type="entry name" value="CRF"/>
    <property type="match status" value="1"/>
</dbReference>
<dbReference type="SMART" id="SM00039">
    <property type="entry name" value="CRF"/>
    <property type="match status" value="1"/>
</dbReference>
<dbReference type="PROSITE" id="PS00511">
    <property type="entry name" value="CRF"/>
    <property type="match status" value="1"/>
</dbReference>
<comment type="function">
    <text>Stimulates fluid secretion by the Malpighian tubules. Increases cyclic AMP production in Malpighian tubules.</text>
</comment>
<comment type="subcellular location">
    <subcellularLocation>
        <location>Secreted</location>
    </subcellularLocation>
</comment>
<comment type="similarity">
    <text evidence="1">Belongs to the sauvagine/corticotropin-releasing factor/urotensin I family.</text>
</comment>
<keyword id="KW-0903">Direct protein sequencing</keyword>
<keyword id="KW-0372">Hormone</keyword>
<keyword id="KW-0964">Secreted</keyword>
<organism>
    <name type="scientific">Tenebrio molitor</name>
    <name type="common">Yellow mealworm beetle</name>
    <dbReference type="NCBI Taxonomy" id="7067"/>
    <lineage>
        <taxon>Eukaryota</taxon>
        <taxon>Metazoa</taxon>
        <taxon>Ecdysozoa</taxon>
        <taxon>Arthropoda</taxon>
        <taxon>Hexapoda</taxon>
        <taxon>Insecta</taxon>
        <taxon>Pterygota</taxon>
        <taxon>Neoptera</taxon>
        <taxon>Endopterygota</taxon>
        <taxon>Coleoptera</taxon>
        <taxon>Polyphaga</taxon>
        <taxon>Cucujiformia</taxon>
        <taxon>Tenebrionidae</taxon>
        <taxon>Tenebrio</taxon>
    </lineage>
</organism>
<proteinExistence type="evidence at protein level"/>